<proteinExistence type="evidence at protein level"/>
<feature type="peptide" id="PRO_0000044818" description="Peptide YY-like">
    <location>
        <begin position="1"/>
        <end position="36"/>
    </location>
</feature>
<feature type="modified residue" description="Tyrosine amide" evidence="1">
    <location>
        <position position="36"/>
    </location>
</feature>
<protein>
    <recommendedName>
        <fullName>Peptide YY-like</fullName>
        <shortName>PYY</shortName>
    </recommendedName>
</protein>
<sequence length="36" mass="4251">YPPKPENPGDDAAPEELAKYYSALRHYINLITRQRY</sequence>
<organism>
    <name type="scientific">Caliraja rhina</name>
    <name type="common">Longnose skate</name>
    <name type="synonym">Raja rhina</name>
    <dbReference type="NCBI Taxonomy" id="3363546"/>
    <lineage>
        <taxon>Eukaryota</taxon>
        <taxon>Metazoa</taxon>
        <taxon>Chordata</taxon>
        <taxon>Craniata</taxon>
        <taxon>Vertebrata</taxon>
        <taxon>Chondrichthyes</taxon>
        <taxon>Elasmobranchii</taxon>
        <taxon>Batoidea</taxon>
        <taxon>Rajiformes</taxon>
        <taxon>Rajidae</taxon>
        <taxon>Caliraja</taxon>
    </lineage>
</organism>
<accession>P29206</accession>
<dbReference type="SMR" id="P29206"/>
<dbReference type="GO" id="GO:0005615">
    <property type="term" value="C:extracellular space"/>
    <property type="evidence" value="ECO:0007669"/>
    <property type="project" value="TreeGrafter"/>
</dbReference>
<dbReference type="GO" id="GO:0005184">
    <property type="term" value="F:neuropeptide hormone activity"/>
    <property type="evidence" value="ECO:0007669"/>
    <property type="project" value="TreeGrafter"/>
</dbReference>
<dbReference type="GO" id="GO:0031841">
    <property type="term" value="F:neuropeptide Y receptor binding"/>
    <property type="evidence" value="ECO:0007669"/>
    <property type="project" value="TreeGrafter"/>
</dbReference>
<dbReference type="GO" id="GO:0007631">
    <property type="term" value="P:feeding behavior"/>
    <property type="evidence" value="ECO:0007669"/>
    <property type="project" value="TreeGrafter"/>
</dbReference>
<dbReference type="GO" id="GO:0007218">
    <property type="term" value="P:neuropeptide signaling pathway"/>
    <property type="evidence" value="ECO:0007669"/>
    <property type="project" value="TreeGrafter"/>
</dbReference>
<dbReference type="CDD" id="cd00126">
    <property type="entry name" value="PAH"/>
    <property type="match status" value="1"/>
</dbReference>
<dbReference type="Gene3D" id="6.10.250.900">
    <property type="match status" value="1"/>
</dbReference>
<dbReference type="InterPro" id="IPR001955">
    <property type="entry name" value="Pancreatic_hormone-like"/>
</dbReference>
<dbReference type="InterPro" id="IPR020392">
    <property type="entry name" value="Pancreatic_hormone-like_CS"/>
</dbReference>
<dbReference type="PANTHER" id="PTHR10533">
    <property type="entry name" value="NEUROPEPTIDE Y/PANCREATIC HORMONE/PEPTIDE YY"/>
    <property type="match status" value="1"/>
</dbReference>
<dbReference type="PANTHER" id="PTHR10533:SF14">
    <property type="entry name" value="PEPTIDE YY-RELATED"/>
    <property type="match status" value="1"/>
</dbReference>
<dbReference type="Pfam" id="PF00159">
    <property type="entry name" value="Hormone_3"/>
    <property type="match status" value="1"/>
</dbReference>
<dbReference type="PRINTS" id="PR00278">
    <property type="entry name" value="PANCHORMONE"/>
</dbReference>
<dbReference type="SMART" id="SM00309">
    <property type="entry name" value="PAH"/>
    <property type="match status" value="1"/>
</dbReference>
<dbReference type="PROSITE" id="PS00265">
    <property type="entry name" value="PANCREATIC_HORMONE_1"/>
    <property type="match status" value="1"/>
</dbReference>
<dbReference type="PROSITE" id="PS50276">
    <property type="entry name" value="PANCREATIC_HORMONE_2"/>
    <property type="match status" value="1"/>
</dbReference>
<comment type="subcellular location">
    <subcellularLocation>
        <location>Secreted</location>
    </subcellularLocation>
</comment>
<comment type="similarity">
    <text evidence="2">Belongs to the NPY family.</text>
</comment>
<reference key="1">
    <citation type="journal article" date="1991" name="Peptides">
        <title>Neuropeptide Y-related peptides from the pancreas of a teleostean (eel), holostean (bowfin) and elasmobranch (skate) fish.</title>
        <authorList>
            <person name="Conlon J.M."/>
            <person name="Bjenning C."/>
            <person name="Moon T.W."/>
            <person name="Youson J.H."/>
            <person name="Thim L."/>
        </authorList>
    </citation>
    <scope>PROTEIN SEQUENCE</scope>
    <scope>AMIDATION AT TYR-36</scope>
</reference>
<name>PYY_CALRN</name>
<evidence type="ECO:0000269" key="1">
    <source>
    </source>
</evidence>
<evidence type="ECO:0000305" key="2"/>
<keyword id="KW-0027">Amidation</keyword>
<keyword id="KW-0903">Direct protein sequencing</keyword>
<keyword id="KW-0372">Hormone</keyword>
<keyword id="KW-0964">Secreted</keyword>